<keyword id="KW-0963">Cytoplasm</keyword>
<keyword id="KW-0238">DNA-binding</keyword>
<keyword id="KW-0479">Metal-binding</keyword>
<keyword id="KW-0539">Nucleus</keyword>
<keyword id="KW-0597">Phosphoprotein</keyword>
<keyword id="KW-1185">Reference proteome</keyword>
<keyword id="KW-0804">Transcription</keyword>
<keyword id="KW-0805">Transcription regulation</keyword>
<keyword id="KW-0862">Zinc</keyword>
<sequence length="977" mass="107809">MMQQRSGSLSLLSNAVQAGQSSDPMQDDPAKTEPGTPKGYDGSKNSSPASVPSWIHEKTKAGKDRKRLPLACQSCRKKKVKCSGERPSCDQCLKHNIPCIYKSNSTKRSHSRHEEIHHQQQLHLNHQYQHQHKNVAANSIDNLSRQYSQPNHINTHDSVNSPPSYGIMASATNQPLSHPTIVPSSNSSSLLNSTNNISHNPQVSLMSASLSKNLVLDPASPKSVSPDLVYVSSDNPPVSTAASAYSSSLPISDVTRALPLAPASNSQHPSLSSQPVSVPSNTINIPTDSLSIVSNPSQTPAKFDSNRISQVPNSDYSIYSNFNNFPIANHAPSFPQSSVKKLDSSFSPTSLPTFTTNSASSGLSTSYTNNNDTTSDNNSLQAVPRLDPVPSLTLSSTPVAELPPLELRIHLAEVFFHCCHGQSYNLFHRPTFFESLNNNTVPLVVVYAVCAVSARFSSRMHDRFSPPYMAGEQYAREARRLALDNFDRPDLSLVAALLLLSLHDSGTCETGKSWMYGGMALRMAAALQLNCEQGSNPLDLDNIDSGPRISFLERELRRRTFWSCFLMDRYASSHEHLQFLDENDIGIQLPVHELLFTKQIAGVTQTLDGRILEGVPSIVIPADTTENMGVAAYTVKIIALWGRAVKYLKQDGKRRDPYPYWHRNSDFSHISEALYAWADGLPQRLKYSAVGLENHLSIQQGAQYAFLHLAYHHTLMWLFRSIGETENNQLSKISSSVSLAGNTVSFSPVSHTPINVTNGESQNNSNNDPSANGAARRLHKAAREICLRCANAISMIVDDCRKHNVILTSPFIASGVYTAFCVQAEAAFGSNVLAASTARHNLEIDLRLMLEMKNYWGSISALCDKMSEIWADWVQRTSSGIQEEDTIPNEMIDEERMLDLEKHFMYITESPIVPNQAAQKSYSPDLMSYFGFAKNSDLQQWNGLWPSDDLRNYQESTIDSLVAYATGNPGWNISFAG</sequence>
<gene>
    <name type="ORF">SPAC1327.01c</name>
</gene>
<proteinExistence type="evidence at protein level"/>
<dbReference type="EMBL" id="CU329670">
    <property type="protein sequence ID" value="CAB66172.2"/>
    <property type="molecule type" value="Genomic_DNA"/>
</dbReference>
<dbReference type="EMBL" id="AB028000">
    <property type="protein sequence ID" value="BAA87304.1"/>
    <property type="status" value="ALT_SEQ"/>
    <property type="molecule type" value="Genomic_DNA"/>
</dbReference>
<dbReference type="RefSeq" id="NP_593664.2">
    <property type="nucleotide sequence ID" value="NM_001019096.2"/>
</dbReference>
<dbReference type="SMR" id="Q1MTM9"/>
<dbReference type="BioGRID" id="279525">
    <property type="interactions" value="4"/>
</dbReference>
<dbReference type="FunCoup" id="Q1MTM9">
    <property type="interactions" value="2"/>
</dbReference>
<dbReference type="STRING" id="284812.Q1MTM9"/>
<dbReference type="iPTMnet" id="Q1MTM9"/>
<dbReference type="PaxDb" id="4896-SPAC1327.01c.1"/>
<dbReference type="EnsemblFungi" id="SPAC1327.01c.1">
    <property type="protein sequence ID" value="SPAC1327.01c.1:pep"/>
    <property type="gene ID" value="SPAC1327.01c"/>
</dbReference>
<dbReference type="KEGG" id="spo:2543092"/>
<dbReference type="PomBase" id="SPAC1327.01c"/>
<dbReference type="VEuPathDB" id="FungiDB:SPAC1327.01c"/>
<dbReference type="eggNOG" id="ENOG502QR2H">
    <property type="taxonomic scope" value="Eukaryota"/>
</dbReference>
<dbReference type="HOGENOM" id="CLU_304223_0_0_1"/>
<dbReference type="InParanoid" id="Q1MTM9"/>
<dbReference type="OMA" id="ADTTENM"/>
<dbReference type="PhylomeDB" id="Q1MTM9"/>
<dbReference type="PRO" id="PR:Q1MTM9"/>
<dbReference type="Proteomes" id="UP000002485">
    <property type="component" value="Chromosome I"/>
</dbReference>
<dbReference type="GO" id="GO:0005737">
    <property type="term" value="C:cytoplasm"/>
    <property type="evidence" value="ECO:0007005"/>
    <property type="project" value="PomBase"/>
</dbReference>
<dbReference type="GO" id="GO:0005634">
    <property type="term" value="C:nucleus"/>
    <property type="evidence" value="ECO:0007005"/>
    <property type="project" value="PomBase"/>
</dbReference>
<dbReference type="GO" id="GO:0000981">
    <property type="term" value="F:DNA-binding transcription factor activity, RNA polymerase II-specific"/>
    <property type="evidence" value="ECO:0000255"/>
    <property type="project" value="PomBase"/>
</dbReference>
<dbReference type="GO" id="GO:0000978">
    <property type="term" value="F:RNA polymerase II cis-regulatory region sequence-specific DNA binding"/>
    <property type="evidence" value="ECO:0000255"/>
    <property type="project" value="PomBase"/>
</dbReference>
<dbReference type="GO" id="GO:0008270">
    <property type="term" value="F:zinc ion binding"/>
    <property type="evidence" value="ECO:0000255"/>
    <property type="project" value="PomBase"/>
</dbReference>
<dbReference type="GO" id="GO:0006351">
    <property type="term" value="P:DNA-templated transcription"/>
    <property type="evidence" value="ECO:0007669"/>
    <property type="project" value="InterPro"/>
</dbReference>
<dbReference type="GO" id="GO:0006357">
    <property type="term" value="P:regulation of transcription by RNA polymerase II"/>
    <property type="evidence" value="ECO:0000255"/>
    <property type="project" value="PomBase"/>
</dbReference>
<dbReference type="CDD" id="cd12148">
    <property type="entry name" value="fungal_TF_MHR"/>
    <property type="match status" value="1"/>
</dbReference>
<dbReference type="CDD" id="cd00067">
    <property type="entry name" value="GAL4"/>
    <property type="match status" value="1"/>
</dbReference>
<dbReference type="Gene3D" id="4.10.240.10">
    <property type="entry name" value="Zn(2)-C6 fungal-type DNA-binding domain"/>
    <property type="match status" value="1"/>
</dbReference>
<dbReference type="InterPro" id="IPR050815">
    <property type="entry name" value="TF_fung"/>
</dbReference>
<dbReference type="InterPro" id="IPR007219">
    <property type="entry name" value="Transcription_factor_dom_fun"/>
</dbReference>
<dbReference type="InterPro" id="IPR036864">
    <property type="entry name" value="Zn2-C6_fun-type_DNA-bd_sf"/>
</dbReference>
<dbReference type="InterPro" id="IPR001138">
    <property type="entry name" value="Zn2Cys6_DnaBD"/>
</dbReference>
<dbReference type="PANTHER" id="PTHR47338:SF24">
    <property type="entry name" value="TRANSCRIPTION FACTOR"/>
    <property type="match status" value="1"/>
</dbReference>
<dbReference type="PANTHER" id="PTHR47338">
    <property type="entry name" value="ZN(II)2CYS6 TRANSCRIPTION FACTOR (EUROFUNG)-RELATED"/>
    <property type="match status" value="1"/>
</dbReference>
<dbReference type="Pfam" id="PF04082">
    <property type="entry name" value="Fungal_trans"/>
    <property type="match status" value="1"/>
</dbReference>
<dbReference type="Pfam" id="PF00172">
    <property type="entry name" value="Zn_clus"/>
    <property type="match status" value="1"/>
</dbReference>
<dbReference type="PRINTS" id="PR00755">
    <property type="entry name" value="AFLATOXINBRP"/>
</dbReference>
<dbReference type="SMART" id="SM00906">
    <property type="entry name" value="Fungal_trans"/>
    <property type="match status" value="1"/>
</dbReference>
<dbReference type="SMART" id="SM00066">
    <property type="entry name" value="GAL4"/>
    <property type="match status" value="1"/>
</dbReference>
<dbReference type="SUPFAM" id="SSF57701">
    <property type="entry name" value="Zn2/Cys6 DNA-binding domain"/>
    <property type="match status" value="1"/>
</dbReference>
<dbReference type="PROSITE" id="PS00463">
    <property type="entry name" value="ZN2_CY6_FUNGAL_1"/>
    <property type="match status" value="1"/>
</dbReference>
<dbReference type="PROSITE" id="PS50048">
    <property type="entry name" value="ZN2_CY6_FUNGAL_2"/>
    <property type="match status" value="1"/>
</dbReference>
<evidence type="ECO:0000255" key="1">
    <source>
        <dbReference type="PROSITE-ProRule" id="PRU00227"/>
    </source>
</evidence>
<evidence type="ECO:0000256" key="2">
    <source>
        <dbReference type="SAM" id="MobiDB-lite"/>
    </source>
</evidence>
<evidence type="ECO:0000269" key="3">
    <source>
    </source>
</evidence>
<comment type="subcellular location">
    <subcellularLocation>
        <location>Cytoplasm</location>
    </subcellularLocation>
    <subcellularLocation>
        <location>Nucleus</location>
    </subcellularLocation>
</comment>
<reference key="1">
    <citation type="journal article" date="2002" name="Nature">
        <title>The genome sequence of Schizosaccharomyces pombe.</title>
        <authorList>
            <person name="Wood V."/>
            <person name="Gwilliam R."/>
            <person name="Rajandream M.A."/>
            <person name="Lyne M.H."/>
            <person name="Lyne R."/>
            <person name="Stewart A."/>
            <person name="Sgouros J.G."/>
            <person name="Peat N."/>
            <person name="Hayles J."/>
            <person name="Baker S.G."/>
            <person name="Basham D."/>
            <person name="Bowman S."/>
            <person name="Brooks K."/>
            <person name="Brown D."/>
            <person name="Brown S."/>
            <person name="Chillingworth T."/>
            <person name="Churcher C.M."/>
            <person name="Collins M."/>
            <person name="Connor R."/>
            <person name="Cronin A."/>
            <person name="Davis P."/>
            <person name="Feltwell T."/>
            <person name="Fraser A."/>
            <person name="Gentles S."/>
            <person name="Goble A."/>
            <person name="Hamlin N."/>
            <person name="Harris D.E."/>
            <person name="Hidalgo J."/>
            <person name="Hodgson G."/>
            <person name="Holroyd S."/>
            <person name="Hornsby T."/>
            <person name="Howarth S."/>
            <person name="Huckle E.J."/>
            <person name="Hunt S."/>
            <person name="Jagels K."/>
            <person name="James K.D."/>
            <person name="Jones L."/>
            <person name="Jones M."/>
            <person name="Leather S."/>
            <person name="McDonald S."/>
            <person name="McLean J."/>
            <person name="Mooney P."/>
            <person name="Moule S."/>
            <person name="Mungall K.L."/>
            <person name="Murphy L.D."/>
            <person name="Niblett D."/>
            <person name="Odell C."/>
            <person name="Oliver K."/>
            <person name="O'Neil S."/>
            <person name="Pearson D."/>
            <person name="Quail M.A."/>
            <person name="Rabbinowitsch E."/>
            <person name="Rutherford K.M."/>
            <person name="Rutter S."/>
            <person name="Saunders D."/>
            <person name="Seeger K."/>
            <person name="Sharp S."/>
            <person name="Skelton J."/>
            <person name="Simmonds M.N."/>
            <person name="Squares R."/>
            <person name="Squares S."/>
            <person name="Stevens K."/>
            <person name="Taylor K."/>
            <person name="Taylor R.G."/>
            <person name="Tivey A."/>
            <person name="Walsh S.V."/>
            <person name="Warren T."/>
            <person name="Whitehead S."/>
            <person name="Woodward J.R."/>
            <person name="Volckaert G."/>
            <person name="Aert R."/>
            <person name="Robben J."/>
            <person name="Grymonprez B."/>
            <person name="Weltjens I."/>
            <person name="Vanstreels E."/>
            <person name="Rieger M."/>
            <person name="Schaefer M."/>
            <person name="Mueller-Auer S."/>
            <person name="Gabel C."/>
            <person name="Fuchs M."/>
            <person name="Duesterhoeft A."/>
            <person name="Fritzc C."/>
            <person name="Holzer E."/>
            <person name="Moestl D."/>
            <person name="Hilbert H."/>
            <person name="Borzym K."/>
            <person name="Langer I."/>
            <person name="Beck A."/>
            <person name="Lehrach H."/>
            <person name="Reinhardt R."/>
            <person name="Pohl T.M."/>
            <person name="Eger P."/>
            <person name="Zimmermann W."/>
            <person name="Wedler H."/>
            <person name="Wambutt R."/>
            <person name="Purnelle B."/>
            <person name="Goffeau A."/>
            <person name="Cadieu E."/>
            <person name="Dreano S."/>
            <person name="Gloux S."/>
            <person name="Lelaure V."/>
            <person name="Mottier S."/>
            <person name="Galibert F."/>
            <person name="Aves S.J."/>
            <person name="Xiang Z."/>
            <person name="Hunt C."/>
            <person name="Moore K."/>
            <person name="Hurst S.M."/>
            <person name="Lucas M."/>
            <person name="Rochet M."/>
            <person name="Gaillardin C."/>
            <person name="Tallada V.A."/>
            <person name="Garzon A."/>
            <person name="Thode G."/>
            <person name="Daga R.R."/>
            <person name="Cruzado L."/>
            <person name="Jimenez J."/>
            <person name="Sanchez M."/>
            <person name="del Rey F."/>
            <person name="Benito J."/>
            <person name="Dominguez A."/>
            <person name="Revuelta J.L."/>
            <person name="Moreno S."/>
            <person name="Armstrong J."/>
            <person name="Forsburg S.L."/>
            <person name="Cerutti L."/>
            <person name="Lowe T."/>
            <person name="McCombie W.R."/>
            <person name="Paulsen I."/>
            <person name="Potashkin J."/>
            <person name="Shpakovski G.V."/>
            <person name="Ussery D."/>
            <person name="Barrell B.G."/>
            <person name="Nurse P."/>
        </authorList>
    </citation>
    <scope>NUCLEOTIDE SEQUENCE [LARGE SCALE GENOMIC DNA]</scope>
    <source>
        <strain>972 / ATCC 24843</strain>
    </source>
</reference>
<reference key="2">
    <citation type="journal article" date="2000" name="Genes Cells">
        <title>Large-scale screening of intracellular protein localization in living fission yeast cells by the use of a GFP-fusion genomic DNA library.</title>
        <authorList>
            <person name="Ding D.-Q."/>
            <person name="Tomita Y."/>
            <person name="Yamamoto A."/>
            <person name="Chikashige Y."/>
            <person name="Haraguchi T."/>
            <person name="Hiraoka Y."/>
        </authorList>
    </citation>
    <scope>NUCLEOTIDE SEQUENCE [LARGE SCALE GENOMIC DNA] OF 29-216</scope>
    <scope>SUBCELLULAR LOCATION</scope>
    <source>
        <strain>ATCC 38364 / 968</strain>
    </source>
</reference>
<reference key="3">
    <citation type="journal article" date="2006" name="Nat. Biotechnol.">
        <title>ORFeome cloning and global analysis of protein localization in the fission yeast Schizosaccharomyces pombe.</title>
        <authorList>
            <person name="Matsuyama A."/>
            <person name="Arai R."/>
            <person name="Yashiroda Y."/>
            <person name="Shirai A."/>
            <person name="Kamata A."/>
            <person name="Sekido S."/>
            <person name="Kobayashi Y."/>
            <person name="Hashimoto A."/>
            <person name="Hamamoto M."/>
            <person name="Hiraoka Y."/>
            <person name="Horinouchi S."/>
            <person name="Yoshida M."/>
        </authorList>
    </citation>
    <scope>SUBCELLULAR LOCATION [LARGE SCALE ANALYSIS]</scope>
</reference>
<reference key="4">
    <citation type="journal article" date="2008" name="J. Proteome Res.">
        <title>Phosphoproteome analysis of fission yeast.</title>
        <authorList>
            <person name="Wilson-Grady J.T."/>
            <person name="Villen J."/>
            <person name="Gygi S.P."/>
        </authorList>
    </citation>
    <scope>PHOSPHORYLATION [LARGE SCALE ANALYSIS] AT SER-220</scope>
    <scope>IDENTIFICATION BY MASS SPECTROMETRY</scope>
</reference>
<feature type="chain" id="PRO_0000351072" description="Uncharacterized transcriptional regulatory protein C1327.01c">
    <location>
        <begin position="1"/>
        <end position="977"/>
    </location>
</feature>
<feature type="DNA-binding region" description="Zn(2)-C6 fungal-type" evidence="1">
    <location>
        <begin position="72"/>
        <end position="99"/>
    </location>
</feature>
<feature type="region of interest" description="Disordered" evidence="2">
    <location>
        <begin position="1"/>
        <end position="65"/>
    </location>
</feature>
<feature type="region of interest" description="Disordered" evidence="2">
    <location>
        <begin position="176"/>
        <end position="195"/>
    </location>
</feature>
<feature type="region of interest" description="Disordered" evidence="2">
    <location>
        <begin position="287"/>
        <end position="307"/>
    </location>
</feature>
<feature type="region of interest" description="Disordered" evidence="2">
    <location>
        <begin position="357"/>
        <end position="380"/>
    </location>
</feature>
<feature type="region of interest" description="Disordered" evidence="2">
    <location>
        <begin position="751"/>
        <end position="774"/>
    </location>
</feature>
<feature type="compositionally biased region" description="Polar residues" evidence="2">
    <location>
        <begin position="1"/>
        <end position="24"/>
    </location>
</feature>
<feature type="compositionally biased region" description="Low complexity" evidence="2">
    <location>
        <begin position="177"/>
        <end position="195"/>
    </location>
</feature>
<feature type="compositionally biased region" description="Low complexity" evidence="2">
    <location>
        <begin position="364"/>
        <end position="379"/>
    </location>
</feature>
<feature type="compositionally biased region" description="Polar residues" evidence="2">
    <location>
        <begin position="751"/>
        <end position="770"/>
    </location>
</feature>
<feature type="modified residue" description="Phosphoserine" evidence="3">
    <location>
        <position position="220"/>
    </location>
</feature>
<protein>
    <recommendedName>
        <fullName>Uncharacterized transcriptional regulatory protein C1327.01c</fullName>
    </recommendedName>
</protein>
<organism>
    <name type="scientific">Schizosaccharomyces pombe (strain 972 / ATCC 24843)</name>
    <name type="common">Fission yeast</name>
    <dbReference type="NCBI Taxonomy" id="284812"/>
    <lineage>
        <taxon>Eukaryota</taxon>
        <taxon>Fungi</taxon>
        <taxon>Dikarya</taxon>
        <taxon>Ascomycota</taxon>
        <taxon>Taphrinomycotina</taxon>
        <taxon>Schizosaccharomycetes</taxon>
        <taxon>Schizosaccharomycetales</taxon>
        <taxon>Schizosaccharomycetaceae</taxon>
        <taxon>Schizosaccharomyces</taxon>
    </lineage>
</organism>
<accession>Q1MTM9</accession>
<accession>O94540</accession>
<name>YFN1_SCHPO</name>